<comment type="function">
    <text evidence="1">Catalyzes the reductive methylation of 2'-deoxyuridine-5'-monophosphate (dUMP) to 2'-deoxythymidine-5'-monophosphate (dTMP) while utilizing 5,10-methylenetetrahydrofolate (mTHF) as the methyl donor, and NADPH and FADH(2) as the reductant.</text>
</comment>
<comment type="catalytic activity">
    <reaction evidence="1">
        <text>dUMP + (6R)-5,10-methylene-5,6,7,8-tetrahydrofolate + NADPH + H(+) = dTMP + (6S)-5,6,7,8-tetrahydrofolate + NADP(+)</text>
        <dbReference type="Rhea" id="RHEA:29043"/>
        <dbReference type="ChEBI" id="CHEBI:15378"/>
        <dbReference type="ChEBI" id="CHEBI:15636"/>
        <dbReference type="ChEBI" id="CHEBI:57453"/>
        <dbReference type="ChEBI" id="CHEBI:57783"/>
        <dbReference type="ChEBI" id="CHEBI:58349"/>
        <dbReference type="ChEBI" id="CHEBI:63528"/>
        <dbReference type="ChEBI" id="CHEBI:246422"/>
        <dbReference type="EC" id="2.1.1.148"/>
    </reaction>
</comment>
<comment type="cofactor">
    <cofactor evidence="1">
        <name>FAD</name>
        <dbReference type="ChEBI" id="CHEBI:57692"/>
    </cofactor>
    <text evidence="1">Binds 4 FAD per tetramer. Each FAD binding site is formed by three monomers.</text>
</comment>
<comment type="pathway">
    <text evidence="1">Pyrimidine metabolism; dTTP biosynthesis.</text>
</comment>
<comment type="subunit">
    <text evidence="1">Homotetramer.</text>
</comment>
<comment type="similarity">
    <text evidence="1">Belongs to the thymidylate synthase ThyX family.</text>
</comment>
<organism>
    <name type="scientific">Ruegeria pomeroyi (strain ATCC 700808 / DSM 15171 / DSS-3)</name>
    <name type="common">Silicibacter pomeroyi</name>
    <dbReference type="NCBI Taxonomy" id="246200"/>
    <lineage>
        <taxon>Bacteria</taxon>
        <taxon>Pseudomonadati</taxon>
        <taxon>Pseudomonadota</taxon>
        <taxon>Alphaproteobacteria</taxon>
        <taxon>Rhodobacterales</taxon>
        <taxon>Roseobacteraceae</taxon>
        <taxon>Ruegeria</taxon>
    </lineage>
</organism>
<protein>
    <recommendedName>
        <fullName evidence="1">Flavin-dependent thymidylate synthase</fullName>
        <shortName evidence="1">FDTS</shortName>
        <ecNumber evidence="1">2.1.1.148</ecNumber>
    </recommendedName>
    <alternativeName>
        <fullName evidence="1">FAD-dependent thymidylate synthase</fullName>
    </alternativeName>
    <alternativeName>
        <fullName evidence="1">Thymidylate synthase ThyX</fullName>
        <shortName evidence="1">TS</shortName>
        <shortName evidence="1">TSase</shortName>
    </alternativeName>
</protein>
<sequence length="302" mass="34619">MPLSSEQLAEIDAQRAHTAPTRRVVSPGMESHLYRAHPVLDHGFVRVIDYMGDDAAICQAARVSYGTGTKSVQNDEGLIRYLMRHWHSTPFEMCELKLHVKLPVFVARQWIRHRTANVNEYSARYSILDREFYIPAPEHVAAQSAVNNQGRGEALQGEEAARVLEILKADSARCYDNYEAMIGQEGQQGLARELARMNLPANIYTQWYWKVDLHNLFHFLRLRADAHAQYEIRVYAETMCRLVADWVPFAYKAFEDYRLGAVNLSAQMVDSLRRMLAGEAVTQETSGLSAREWREFQDVIGR</sequence>
<gene>
    <name evidence="1" type="primary">thyX</name>
    <name type="ordered locus">SPO1273</name>
</gene>
<proteinExistence type="inferred from homology"/>
<reference key="1">
    <citation type="journal article" date="2004" name="Nature">
        <title>Genome sequence of Silicibacter pomeroyi reveals adaptations to the marine environment.</title>
        <authorList>
            <person name="Moran M.A."/>
            <person name="Buchan A."/>
            <person name="Gonzalez J.M."/>
            <person name="Heidelberg J.F."/>
            <person name="Whitman W.B."/>
            <person name="Kiene R.P."/>
            <person name="Henriksen J.R."/>
            <person name="King G.M."/>
            <person name="Belas R."/>
            <person name="Fuqua C."/>
            <person name="Brinkac L.M."/>
            <person name="Lewis M."/>
            <person name="Johri S."/>
            <person name="Weaver B."/>
            <person name="Pai G."/>
            <person name="Eisen J.A."/>
            <person name="Rahe E."/>
            <person name="Sheldon W.M."/>
            <person name="Ye W."/>
            <person name="Miller T.R."/>
            <person name="Carlton J."/>
            <person name="Rasko D.A."/>
            <person name="Paulsen I.T."/>
            <person name="Ren Q."/>
            <person name="Daugherty S.C."/>
            <person name="DeBoy R.T."/>
            <person name="Dodson R.J."/>
            <person name="Durkin A.S."/>
            <person name="Madupu R."/>
            <person name="Nelson W.C."/>
            <person name="Sullivan S.A."/>
            <person name="Rosovitz M.J."/>
            <person name="Haft D.H."/>
            <person name="Selengut J."/>
            <person name="Ward N."/>
        </authorList>
    </citation>
    <scope>NUCLEOTIDE SEQUENCE [LARGE SCALE GENOMIC DNA]</scope>
    <source>
        <strain>ATCC 700808 / DSM 15171 / DSS-3</strain>
    </source>
</reference>
<reference key="2">
    <citation type="journal article" date="2014" name="Stand. Genomic Sci.">
        <title>An updated genome annotation for the model marine bacterium Ruegeria pomeroyi DSS-3.</title>
        <authorList>
            <person name="Rivers A.R."/>
            <person name="Smith C.B."/>
            <person name="Moran M.A."/>
        </authorList>
    </citation>
    <scope>GENOME REANNOTATION</scope>
    <source>
        <strain>ATCC 700808 / DSM 15171 / DSS-3</strain>
    </source>
</reference>
<feature type="chain" id="PRO_0000175575" description="Flavin-dependent thymidylate synthase">
    <location>
        <begin position="1"/>
        <end position="302"/>
    </location>
</feature>
<feature type="domain" description="ThyX" evidence="2">
    <location>
        <begin position="43"/>
        <end position="257"/>
    </location>
</feature>
<feature type="short sequence motif" description="ThyX motif" evidence="1">
    <location>
        <begin position="112"/>
        <end position="122"/>
    </location>
</feature>
<feature type="active site" description="Involved in ionization of N3 of dUMP, leading to its activation" evidence="1">
    <location>
        <position position="223"/>
    </location>
</feature>
<feature type="binding site" evidence="1">
    <location>
        <position position="89"/>
    </location>
    <ligand>
        <name>FAD</name>
        <dbReference type="ChEBI" id="CHEBI:57692"/>
        <note>ligand shared between neighboring subunits</note>
    </ligand>
</feature>
<feature type="binding site" evidence="1">
    <location>
        <begin position="109"/>
        <end position="112"/>
    </location>
    <ligand>
        <name>dUMP</name>
        <dbReference type="ChEBI" id="CHEBI:246422"/>
        <note>ligand shared between dimeric partners</note>
    </ligand>
</feature>
<feature type="binding site" evidence="1">
    <location>
        <begin position="112"/>
        <end position="114"/>
    </location>
    <ligand>
        <name>FAD</name>
        <dbReference type="ChEBI" id="CHEBI:57692"/>
        <note>ligand shared between neighboring subunits</note>
    </ligand>
</feature>
<feature type="binding site" description="in other chain" evidence="1">
    <location>
        <begin position="120"/>
        <end position="124"/>
    </location>
    <ligand>
        <name>dUMP</name>
        <dbReference type="ChEBI" id="CHEBI:246422"/>
        <note>ligand shared between dimeric partners</note>
    </ligand>
</feature>
<feature type="binding site" evidence="1">
    <location>
        <position position="120"/>
    </location>
    <ligand>
        <name>FAD</name>
        <dbReference type="ChEBI" id="CHEBI:57692"/>
        <note>ligand shared between neighboring subunits</note>
    </ligand>
</feature>
<feature type="binding site" description="in other chain" evidence="1">
    <location>
        <position position="196"/>
    </location>
    <ligand>
        <name>dUMP</name>
        <dbReference type="ChEBI" id="CHEBI:246422"/>
        <note>ligand shared between dimeric partners</note>
    </ligand>
</feature>
<feature type="binding site" evidence="1">
    <location>
        <begin position="212"/>
        <end position="214"/>
    </location>
    <ligand>
        <name>FAD</name>
        <dbReference type="ChEBI" id="CHEBI:57692"/>
        <note>ligand shared between neighboring subunits</note>
    </ligand>
</feature>
<feature type="binding site" evidence="1">
    <location>
        <position position="218"/>
    </location>
    <ligand>
        <name>FAD</name>
        <dbReference type="ChEBI" id="CHEBI:57692"/>
        <note>ligand shared between neighboring subunits</note>
    </ligand>
</feature>
<feature type="binding site" evidence="1">
    <location>
        <position position="223"/>
    </location>
    <ligand>
        <name>dUMP</name>
        <dbReference type="ChEBI" id="CHEBI:246422"/>
        <note>ligand shared between dimeric partners</note>
    </ligand>
</feature>
<accession>Q5LTY7</accession>
<dbReference type="EC" id="2.1.1.148" evidence="1"/>
<dbReference type="EMBL" id="CP000031">
    <property type="protein sequence ID" value="AAV94565.2"/>
    <property type="molecule type" value="Genomic_DNA"/>
</dbReference>
<dbReference type="RefSeq" id="WP_030003195.1">
    <property type="nucleotide sequence ID" value="NC_003911.12"/>
</dbReference>
<dbReference type="SMR" id="Q5LTY7"/>
<dbReference type="STRING" id="246200.SPO1273"/>
<dbReference type="PaxDb" id="246200-SPO1273"/>
<dbReference type="KEGG" id="sil:SPO1273"/>
<dbReference type="eggNOG" id="COG1351">
    <property type="taxonomic scope" value="Bacteria"/>
</dbReference>
<dbReference type="HOGENOM" id="CLU_067790_0_0_5"/>
<dbReference type="OrthoDB" id="9774464at2"/>
<dbReference type="UniPathway" id="UPA00575"/>
<dbReference type="Proteomes" id="UP000001023">
    <property type="component" value="Chromosome"/>
</dbReference>
<dbReference type="GO" id="GO:0050660">
    <property type="term" value="F:flavin adenine dinucleotide binding"/>
    <property type="evidence" value="ECO:0007669"/>
    <property type="project" value="InterPro"/>
</dbReference>
<dbReference type="GO" id="GO:0070402">
    <property type="term" value="F:NADPH binding"/>
    <property type="evidence" value="ECO:0007669"/>
    <property type="project" value="TreeGrafter"/>
</dbReference>
<dbReference type="GO" id="GO:0050797">
    <property type="term" value="F:thymidylate synthase (FAD) activity"/>
    <property type="evidence" value="ECO:0007669"/>
    <property type="project" value="UniProtKB-UniRule"/>
</dbReference>
<dbReference type="GO" id="GO:0004799">
    <property type="term" value="F:thymidylate synthase activity"/>
    <property type="evidence" value="ECO:0007669"/>
    <property type="project" value="TreeGrafter"/>
</dbReference>
<dbReference type="GO" id="GO:0006231">
    <property type="term" value="P:dTMP biosynthetic process"/>
    <property type="evidence" value="ECO:0007669"/>
    <property type="project" value="UniProtKB-UniRule"/>
</dbReference>
<dbReference type="GO" id="GO:0006235">
    <property type="term" value="P:dTTP biosynthetic process"/>
    <property type="evidence" value="ECO:0007669"/>
    <property type="project" value="UniProtKB-UniRule"/>
</dbReference>
<dbReference type="GO" id="GO:0032259">
    <property type="term" value="P:methylation"/>
    <property type="evidence" value="ECO:0007669"/>
    <property type="project" value="UniProtKB-KW"/>
</dbReference>
<dbReference type="CDD" id="cd20175">
    <property type="entry name" value="ThyX"/>
    <property type="match status" value="1"/>
</dbReference>
<dbReference type="Gene3D" id="3.30.1360.170">
    <property type="match status" value="1"/>
</dbReference>
<dbReference type="HAMAP" id="MF_01408">
    <property type="entry name" value="ThyX"/>
    <property type="match status" value="1"/>
</dbReference>
<dbReference type="InterPro" id="IPR003669">
    <property type="entry name" value="Thymidylate_synthase_ThyX"/>
</dbReference>
<dbReference type="InterPro" id="IPR036098">
    <property type="entry name" value="Thymidylate_synthase_ThyX_sf"/>
</dbReference>
<dbReference type="NCBIfam" id="TIGR02170">
    <property type="entry name" value="thyX"/>
    <property type="match status" value="1"/>
</dbReference>
<dbReference type="PANTHER" id="PTHR34934">
    <property type="entry name" value="FLAVIN-DEPENDENT THYMIDYLATE SYNTHASE"/>
    <property type="match status" value="1"/>
</dbReference>
<dbReference type="PANTHER" id="PTHR34934:SF1">
    <property type="entry name" value="FLAVIN-DEPENDENT THYMIDYLATE SYNTHASE"/>
    <property type="match status" value="1"/>
</dbReference>
<dbReference type="Pfam" id="PF02511">
    <property type="entry name" value="Thy1"/>
    <property type="match status" value="1"/>
</dbReference>
<dbReference type="SUPFAM" id="SSF69796">
    <property type="entry name" value="Thymidylate synthase-complementing protein Thy1"/>
    <property type="match status" value="1"/>
</dbReference>
<dbReference type="PROSITE" id="PS51331">
    <property type="entry name" value="THYX"/>
    <property type="match status" value="1"/>
</dbReference>
<evidence type="ECO:0000255" key="1">
    <source>
        <dbReference type="HAMAP-Rule" id="MF_01408"/>
    </source>
</evidence>
<evidence type="ECO:0000255" key="2">
    <source>
        <dbReference type="PROSITE-ProRule" id="PRU00661"/>
    </source>
</evidence>
<name>THYX_RUEPO</name>
<keyword id="KW-0274">FAD</keyword>
<keyword id="KW-0285">Flavoprotein</keyword>
<keyword id="KW-0489">Methyltransferase</keyword>
<keyword id="KW-0521">NADP</keyword>
<keyword id="KW-0545">Nucleotide biosynthesis</keyword>
<keyword id="KW-1185">Reference proteome</keyword>
<keyword id="KW-0808">Transferase</keyword>